<proteinExistence type="evidence at transcript level"/>
<organism>
    <name type="scientific">Arabidopsis thaliana</name>
    <name type="common">Mouse-ear cress</name>
    <dbReference type="NCBI Taxonomy" id="3702"/>
    <lineage>
        <taxon>Eukaryota</taxon>
        <taxon>Viridiplantae</taxon>
        <taxon>Streptophyta</taxon>
        <taxon>Embryophyta</taxon>
        <taxon>Tracheophyta</taxon>
        <taxon>Spermatophyta</taxon>
        <taxon>Magnoliopsida</taxon>
        <taxon>eudicotyledons</taxon>
        <taxon>Gunneridae</taxon>
        <taxon>Pentapetalae</taxon>
        <taxon>rosids</taxon>
        <taxon>malvids</taxon>
        <taxon>Brassicales</taxon>
        <taxon>Brassicaceae</taxon>
        <taxon>Camelineae</taxon>
        <taxon>Arabidopsis</taxon>
    </lineage>
</organism>
<sequence>MAQAVEEWYKQMPIITRSYLTAAVITTVGCSLDIISPYNLYLNPTLVVKQYQYWRLVTNFLYFRKMDLDFMFHMFFLARYCKLLEENSFRGKTADFLYMLLFGASVLTGIVLIGGMIPYLSASFAKIIFLSNSLTFMMVYVWSKQNPYIHMSFLGLFTFTAAYLPWVLLGFSILVGASAWVDLLGMIAGHAYYFLAEVYPRMTNRRPLKTPSFLKALFADEPVVVARPEDVRFAAAPFDEIHQD</sequence>
<dbReference type="EMBL" id="AF118223">
    <property type="protein sequence ID" value="AAD03446.1"/>
    <property type="molecule type" value="Genomic_DNA"/>
</dbReference>
<dbReference type="EMBL" id="AL161501">
    <property type="protein sequence ID" value="CAB80851.1"/>
    <property type="molecule type" value="Genomic_DNA"/>
</dbReference>
<dbReference type="EMBL" id="CP002687">
    <property type="protein sequence ID" value="AEE82434.1"/>
    <property type="molecule type" value="Genomic_DNA"/>
</dbReference>
<dbReference type="EMBL" id="AF389284">
    <property type="protein sequence ID" value="AAK63857.1"/>
    <property type="molecule type" value="mRNA"/>
</dbReference>
<dbReference type="EMBL" id="AY091681">
    <property type="protein sequence ID" value="AAM10280.1"/>
    <property type="molecule type" value="mRNA"/>
</dbReference>
<dbReference type="PIR" id="B85061">
    <property type="entry name" value="B85061"/>
</dbReference>
<dbReference type="RefSeq" id="NP_192395.1">
    <property type="nucleotide sequence ID" value="NM_116724.4"/>
</dbReference>
<dbReference type="SMR" id="Q9ZS88"/>
<dbReference type="BioGRID" id="11134">
    <property type="interactions" value="26"/>
</dbReference>
<dbReference type="FunCoup" id="Q9ZS88">
    <property type="interactions" value="4080"/>
</dbReference>
<dbReference type="IntAct" id="Q9ZS88">
    <property type="interactions" value="25"/>
</dbReference>
<dbReference type="STRING" id="3702.Q9ZS88"/>
<dbReference type="TCDB" id="3.A.16.1.5">
    <property type="family name" value="the endoplasmic reticular retrotranslocon (er-rt) family"/>
</dbReference>
<dbReference type="PaxDb" id="3702-AT4G04860.1"/>
<dbReference type="ProteomicsDB" id="223995"/>
<dbReference type="EnsemblPlants" id="AT4G04860.1">
    <property type="protein sequence ID" value="AT4G04860.1"/>
    <property type="gene ID" value="AT4G04860"/>
</dbReference>
<dbReference type="GeneID" id="825823"/>
<dbReference type="Gramene" id="AT4G04860.1">
    <property type="protein sequence ID" value="AT4G04860.1"/>
    <property type="gene ID" value="AT4G04860"/>
</dbReference>
<dbReference type="KEGG" id="ath:AT4G04860"/>
<dbReference type="Araport" id="AT4G04860"/>
<dbReference type="TAIR" id="AT4G04860">
    <property type="gene designation" value="DER2.2"/>
</dbReference>
<dbReference type="eggNOG" id="KOG0858">
    <property type="taxonomic scope" value="Eukaryota"/>
</dbReference>
<dbReference type="HOGENOM" id="CLU_051898_5_2_1"/>
<dbReference type="InParanoid" id="Q9ZS88"/>
<dbReference type="OMA" id="FKSQYWR"/>
<dbReference type="OrthoDB" id="1716531at2759"/>
<dbReference type="PhylomeDB" id="Q9ZS88"/>
<dbReference type="PRO" id="PR:Q9ZS88"/>
<dbReference type="Proteomes" id="UP000006548">
    <property type="component" value="Chromosome 4"/>
</dbReference>
<dbReference type="ExpressionAtlas" id="Q9ZS88">
    <property type="expression patterns" value="baseline and differential"/>
</dbReference>
<dbReference type="GO" id="GO:0005789">
    <property type="term" value="C:endoplasmic reticulum membrane"/>
    <property type="evidence" value="ECO:0007669"/>
    <property type="project" value="UniProtKB-SubCell"/>
</dbReference>
<dbReference type="GO" id="GO:0006950">
    <property type="term" value="P:response to stress"/>
    <property type="evidence" value="ECO:0007669"/>
    <property type="project" value="UniProtKB-ARBA"/>
</dbReference>
<dbReference type="FunFam" id="1.20.1540.10:FF:000016">
    <property type="entry name" value="Derlin"/>
    <property type="match status" value="1"/>
</dbReference>
<dbReference type="InterPro" id="IPR007599">
    <property type="entry name" value="DER1"/>
</dbReference>
<dbReference type="InterPro" id="IPR035952">
    <property type="entry name" value="Rhomboid-like_sf"/>
</dbReference>
<dbReference type="PANTHER" id="PTHR11009">
    <property type="entry name" value="DER1-LIKE PROTEIN, DERLIN"/>
    <property type="match status" value="1"/>
</dbReference>
<dbReference type="Pfam" id="PF04511">
    <property type="entry name" value="DER1"/>
    <property type="match status" value="1"/>
</dbReference>
<dbReference type="SUPFAM" id="SSF144091">
    <property type="entry name" value="Rhomboid-like"/>
    <property type="match status" value="1"/>
</dbReference>
<protein>
    <recommendedName>
        <fullName>Derlin-2.2</fullName>
    </recommendedName>
    <alternativeName>
        <fullName>AtDerlin2-2</fullName>
    </alternativeName>
</protein>
<reference key="1">
    <citation type="journal article" date="1999" name="Nature">
        <title>Sequence and analysis of chromosome 4 of the plant Arabidopsis thaliana.</title>
        <authorList>
            <person name="Mayer K.F.X."/>
            <person name="Schueller C."/>
            <person name="Wambutt R."/>
            <person name="Murphy G."/>
            <person name="Volckaert G."/>
            <person name="Pohl T."/>
            <person name="Duesterhoeft A."/>
            <person name="Stiekema W."/>
            <person name="Entian K.-D."/>
            <person name="Terryn N."/>
            <person name="Harris B."/>
            <person name="Ansorge W."/>
            <person name="Brandt P."/>
            <person name="Grivell L.A."/>
            <person name="Rieger M."/>
            <person name="Weichselgartner M."/>
            <person name="de Simone V."/>
            <person name="Obermaier B."/>
            <person name="Mache R."/>
            <person name="Mueller M."/>
            <person name="Kreis M."/>
            <person name="Delseny M."/>
            <person name="Puigdomenech P."/>
            <person name="Watson M."/>
            <person name="Schmidtheini T."/>
            <person name="Reichert B."/>
            <person name="Portetelle D."/>
            <person name="Perez-Alonso M."/>
            <person name="Boutry M."/>
            <person name="Bancroft I."/>
            <person name="Vos P."/>
            <person name="Hoheisel J."/>
            <person name="Zimmermann W."/>
            <person name="Wedler H."/>
            <person name="Ridley P."/>
            <person name="Langham S.-A."/>
            <person name="McCullagh B."/>
            <person name="Bilham L."/>
            <person name="Robben J."/>
            <person name="van der Schueren J."/>
            <person name="Grymonprez B."/>
            <person name="Chuang Y.-J."/>
            <person name="Vandenbussche F."/>
            <person name="Braeken M."/>
            <person name="Weltjens I."/>
            <person name="Voet M."/>
            <person name="Bastiaens I."/>
            <person name="Aert R."/>
            <person name="Defoor E."/>
            <person name="Weitzenegger T."/>
            <person name="Bothe G."/>
            <person name="Ramsperger U."/>
            <person name="Hilbert H."/>
            <person name="Braun M."/>
            <person name="Holzer E."/>
            <person name="Brandt A."/>
            <person name="Peters S."/>
            <person name="van Staveren M."/>
            <person name="Dirkse W."/>
            <person name="Mooijman P."/>
            <person name="Klein Lankhorst R."/>
            <person name="Rose M."/>
            <person name="Hauf J."/>
            <person name="Koetter P."/>
            <person name="Berneiser S."/>
            <person name="Hempel S."/>
            <person name="Feldpausch M."/>
            <person name="Lamberth S."/>
            <person name="Van den Daele H."/>
            <person name="De Keyser A."/>
            <person name="Buysshaert C."/>
            <person name="Gielen J."/>
            <person name="Villarroel R."/>
            <person name="De Clercq R."/>
            <person name="van Montagu M."/>
            <person name="Rogers J."/>
            <person name="Cronin A."/>
            <person name="Quail M.A."/>
            <person name="Bray-Allen S."/>
            <person name="Clark L."/>
            <person name="Doggett J."/>
            <person name="Hall S."/>
            <person name="Kay M."/>
            <person name="Lennard N."/>
            <person name="McLay K."/>
            <person name="Mayes R."/>
            <person name="Pettett A."/>
            <person name="Rajandream M.A."/>
            <person name="Lyne M."/>
            <person name="Benes V."/>
            <person name="Rechmann S."/>
            <person name="Borkova D."/>
            <person name="Bloecker H."/>
            <person name="Scharfe M."/>
            <person name="Grimm M."/>
            <person name="Loehnert T.-H."/>
            <person name="Dose S."/>
            <person name="de Haan M."/>
            <person name="Maarse A.C."/>
            <person name="Schaefer M."/>
            <person name="Mueller-Auer S."/>
            <person name="Gabel C."/>
            <person name="Fuchs M."/>
            <person name="Fartmann B."/>
            <person name="Granderath K."/>
            <person name="Dauner D."/>
            <person name="Herzl A."/>
            <person name="Neumann S."/>
            <person name="Argiriou A."/>
            <person name="Vitale D."/>
            <person name="Liguori R."/>
            <person name="Piravandi E."/>
            <person name="Massenet O."/>
            <person name="Quigley F."/>
            <person name="Clabauld G."/>
            <person name="Muendlein A."/>
            <person name="Felber R."/>
            <person name="Schnabl S."/>
            <person name="Hiller R."/>
            <person name="Schmidt W."/>
            <person name="Lecharny A."/>
            <person name="Aubourg S."/>
            <person name="Chefdor F."/>
            <person name="Cooke R."/>
            <person name="Berger C."/>
            <person name="Monfort A."/>
            <person name="Casacuberta E."/>
            <person name="Gibbons T."/>
            <person name="Weber N."/>
            <person name="Vandenbol M."/>
            <person name="Bargues M."/>
            <person name="Terol J."/>
            <person name="Torres A."/>
            <person name="Perez-Perez A."/>
            <person name="Purnelle B."/>
            <person name="Bent E."/>
            <person name="Johnson S."/>
            <person name="Tacon D."/>
            <person name="Jesse T."/>
            <person name="Heijnen L."/>
            <person name="Schwarz S."/>
            <person name="Scholler P."/>
            <person name="Heber S."/>
            <person name="Francs P."/>
            <person name="Bielke C."/>
            <person name="Frishman D."/>
            <person name="Haase D."/>
            <person name="Lemcke K."/>
            <person name="Mewes H.-W."/>
            <person name="Stocker S."/>
            <person name="Zaccaria P."/>
            <person name="Bevan M."/>
            <person name="Wilson R.K."/>
            <person name="de la Bastide M."/>
            <person name="Habermann K."/>
            <person name="Parnell L."/>
            <person name="Dedhia N."/>
            <person name="Gnoj L."/>
            <person name="Schutz K."/>
            <person name="Huang E."/>
            <person name="Spiegel L."/>
            <person name="Sekhon M."/>
            <person name="Murray J."/>
            <person name="Sheet P."/>
            <person name="Cordes M."/>
            <person name="Abu-Threideh J."/>
            <person name="Stoneking T."/>
            <person name="Kalicki J."/>
            <person name="Graves T."/>
            <person name="Harmon G."/>
            <person name="Edwards J."/>
            <person name="Latreille P."/>
            <person name="Courtney L."/>
            <person name="Cloud J."/>
            <person name="Abbott A."/>
            <person name="Scott K."/>
            <person name="Johnson D."/>
            <person name="Minx P."/>
            <person name="Bentley D."/>
            <person name="Fulton B."/>
            <person name="Miller N."/>
            <person name="Greco T."/>
            <person name="Kemp K."/>
            <person name="Kramer J."/>
            <person name="Fulton L."/>
            <person name="Mardis E."/>
            <person name="Dante M."/>
            <person name="Pepin K."/>
            <person name="Hillier L.W."/>
            <person name="Nelson J."/>
            <person name="Spieth J."/>
            <person name="Ryan E."/>
            <person name="Andrews S."/>
            <person name="Geisel C."/>
            <person name="Layman D."/>
            <person name="Du H."/>
            <person name="Ali J."/>
            <person name="Berghoff A."/>
            <person name="Jones K."/>
            <person name="Drone K."/>
            <person name="Cotton M."/>
            <person name="Joshu C."/>
            <person name="Antonoiu B."/>
            <person name="Zidanic M."/>
            <person name="Strong C."/>
            <person name="Sun H."/>
            <person name="Lamar B."/>
            <person name="Yordan C."/>
            <person name="Ma P."/>
            <person name="Zhong J."/>
            <person name="Preston R."/>
            <person name="Vil D."/>
            <person name="Shekher M."/>
            <person name="Matero A."/>
            <person name="Shah R."/>
            <person name="Swaby I.K."/>
            <person name="O'Shaughnessy A."/>
            <person name="Rodriguez M."/>
            <person name="Hoffman J."/>
            <person name="Till S."/>
            <person name="Granat S."/>
            <person name="Shohdy N."/>
            <person name="Hasegawa A."/>
            <person name="Hameed A."/>
            <person name="Lodhi M."/>
            <person name="Johnson A."/>
            <person name="Chen E."/>
            <person name="Marra M.A."/>
            <person name="Martienssen R."/>
            <person name="McCombie W.R."/>
        </authorList>
    </citation>
    <scope>NUCLEOTIDE SEQUENCE [LARGE SCALE GENOMIC DNA]</scope>
    <source>
        <strain>cv. Columbia</strain>
    </source>
</reference>
<reference key="2">
    <citation type="journal article" date="2017" name="Plant J.">
        <title>Araport11: a complete reannotation of the Arabidopsis thaliana reference genome.</title>
        <authorList>
            <person name="Cheng C.Y."/>
            <person name="Krishnakumar V."/>
            <person name="Chan A.P."/>
            <person name="Thibaud-Nissen F."/>
            <person name="Schobel S."/>
            <person name="Town C.D."/>
        </authorList>
    </citation>
    <scope>GENOME REANNOTATION</scope>
    <source>
        <strain>cv. Columbia</strain>
    </source>
</reference>
<reference key="3">
    <citation type="journal article" date="2003" name="Science">
        <title>Empirical analysis of transcriptional activity in the Arabidopsis genome.</title>
        <authorList>
            <person name="Yamada K."/>
            <person name="Lim J."/>
            <person name="Dale J.M."/>
            <person name="Chen H."/>
            <person name="Shinn P."/>
            <person name="Palm C.J."/>
            <person name="Southwick A.M."/>
            <person name="Wu H.C."/>
            <person name="Kim C.J."/>
            <person name="Nguyen M."/>
            <person name="Pham P.K."/>
            <person name="Cheuk R.F."/>
            <person name="Karlin-Newmann G."/>
            <person name="Liu S.X."/>
            <person name="Lam B."/>
            <person name="Sakano H."/>
            <person name="Wu T."/>
            <person name="Yu G."/>
            <person name="Miranda M."/>
            <person name="Quach H.L."/>
            <person name="Tripp M."/>
            <person name="Chang C.H."/>
            <person name="Lee J.M."/>
            <person name="Toriumi M.J."/>
            <person name="Chan M.M."/>
            <person name="Tang C.C."/>
            <person name="Onodera C.S."/>
            <person name="Deng J.M."/>
            <person name="Akiyama K."/>
            <person name="Ansari Y."/>
            <person name="Arakawa T."/>
            <person name="Banh J."/>
            <person name="Banno F."/>
            <person name="Bowser L."/>
            <person name="Brooks S.Y."/>
            <person name="Carninci P."/>
            <person name="Chao Q."/>
            <person name="Choy N."/>
            <person name="Enju A."/>
            <person name="Goldsmith A.D."/>
            <person name="Gurjal M."/>
            <person name="Hansen N.F."/>
            <person name="Hayashizaki Y."/>
            <person name="Johnson-Hopson C."/>
            <person name="Hsuan V.W."/>
            <person name="Iida K."/>
            <person name="Karnes M."/>
            <person name="Khan S."/>
            <person name="Koesema E."/>
            <person name="Ishida J."/>
            <person name="Jiang P.X."/>
            <person name="Jones T."/>
            <person name="Kawai J."/>
            <person name="Kamiya A."/>
            <person name="Meyers C."/>
            <person name="Nakajima M."/>
            <person name="Narusaka M."/>
            <person name="Seki M."/>
            <person name="Sakurai T."/>
            <person name="Satou M."/>
            <person name="Tamse R."/>
            <person name="Vaysberg M."/>
            <person name="Wallender E.K."/>
            <person name="Wong C."/>
            <person name="Yamamura Y."/>
            <person name="Yuan S."/>
            <person name="Shinozaki K."/>
            <person name="Davis R.W."/>
            <person name="Theologis A."/>
            <person name="Ecker J.R."/>
        </authorList>
    </citation>
    <scope>NUCLEOTIDE SEQUENCE [LARGE SCALE MRNA]</scope>
    <source>
        <strain>cv. Columbia</strain>
    </source>
</reference>
<gene>
    <name type="primary">DER2.2</name>
    <name type="ordered locus">At4g04860</name>
    <name type="ORF">T4B21.2</name>
</gene>
<comment type="function">
    <text evidence="1">May be involved in the degradation process of specific misfolded endoplasmic reticulum (ER) luminal proteins.</text>
</comment>
<comment type="subcellular location">
    <subcellularLocation>
        <location evidence="1">Endoplasmic reticulum membrane</location>
        <topology evidence="1">Multi-pass membrane protein</topology>
    </subcellularLocation>
</comment>
<comment type="similarity">
    <text evidence="3">Belongs to the derlin family.</text>
</comment>
<accession>Q9ZS88</accession>
<name>DER22_ARATH</name>
<evidence type="ECO:0000250" key="1"/>
<evidence type="ECO:0000255" key="2"/>
<evidence type="ECO:0000305" key="3"/>
<keyword id="KW-0256">Endoplasmic reticulum</keyword>
<keyword id="KW-0472">Membrane</keyword>
<keyword id="KW-1185">Reference proteome</keyword>
<keyword id="KW-0812">Transmembrane</keyword>
<keyword id="KW-1133">Transmembrane helix</keyword>
<feature type="chain" id="PRO_0000249240" description="Derlin-2.2">
    <location>
        <begin position="1"/>
        <end position="244"/>
    </location>
</feature>
<feature type="topological domain" description="Cytoplasmic" evidence="2">
    <location>
        <begin position="1"/>
        <end position="21"/>
    </location>
</feature>
<feature type="transmembrane region" description="Helical; Name=1" evidence="2">
    <location>
        <begin position="22"/>
        <end position="42"/>
    </location>
</feature>
<feature type="topological domain" description="Lumenal" evidence="2">
    <location>
        <begin position="43"/>
        <end position="96"/>
    </location>
</feature>
<feature type="transmembrane region" description="Helical; Name=2" evidence="2">
    <location>
        <begin position="97"/>
        <end position="117"/>
    </location>
</feature>
<feature type="topological domain" description="Cytoplasmic" evidence="2">
    <location>
        <begin position="118"/>
        <end position="121"/>
    </location>
</feature>
<feature type="transmembrane region" description="Helical; Name=3" evidence="2">
    <location>
        <begin position="122"/>
        <end position="142"/>
    </location>
</feature>
<feature type="topological domain" description="Lumenal" evidence="2">
    <location>
        <begin position="143"/>
        <end position="152"/>
    </location>
</feature>
<feature type="transmembrane region" description="Helical; Name=4" evidence="2">
    <location>
        <begin position="153"/>
        <end position="173"/>
    </location>
</feature>
<feature type="topological domain" description="Cytoplasmic" evidence="2">
    <location>
        <begin position="174"/>
        <end position="244"/>
    </location>
</feature>